<gene>
    <name evidence="1" type="primary">rsmH</name>
    <name type="synonym">mraW</name>
    <name type="ordered locus">BT0306</name>
</gene>
<accession>A1QZA2</accession>
<dbReference type="EC" id="2.1.1.199" evidence="1"/>
<dbReference type="EMBL" id="CP000049">
    <property type="protein sequence ID" value="AAX17644.1"/>
    <property type="molecule type" value="Genomic_DNA"/>
</dbReference>
<dbReference type="RefSeq" id="WP_011772263.1">
    <property type="nucleotide sequence ID" value="NC_008710.1"/>
</dbReference>
<dbReference type="SMR" id="A1QZA2"/>
<dbReference type="KEGG" id="btu:BT0306"/>
<dbReference type="eggNOG" id="COG0275">
    <property type="taxonomic scope" value="Bacteria"/>
</dbReference>
<dbReference type="HOGENOM" id="CLU_038422_1_1_12"/>
<dbReference type="Proteomes" id="UP000001205">
    <property type="component" value="Chromosome"/>
</dbReference>
<dbReference type="GO" id="GO:0005737">
    <property type="term" value="C:cytoplasm"/>
    <property type="evidence" value="ECO:0007669"/>
    <property type="project" value="UniProtKB-SubCell"/>
</dbReference>
<dbReference type="GO" id="GO:0071424">
    <property type="term" value="F:rRNA (cytosine-N4-)-methyltransferase activity"/>
    <property type="evidence" value="ECO:0007669"/>
    <property type="project" value="UniProtKB-UniRule"/>
</dbReference>
<dbReference type="GO" id="GO:0070475">
    <property type="term" value="P:rRNA base methylation"/>
    <property type="evidence" value="ECO:0007669"/>
    <property type="project" value="UniProtKB-UniRule"/>
</dbReference>
<dbReference type="Gene3D" id="1.10.150.170">
    <property type="entry name" value="Putative methyltransferase TM0872, insert domain"/>
    <property type="match status" value="1"/>
</dbReference>
<dbReference type="Gene3D" id="3.40.50.150">
    <property type="entry name" value="Vaccinia Virus protein VP39"/>
    <property type="match status" value="1"/>
</dbReference>
<dbReference type="HAMAP" id="MF_01007">
    <property type="entry name" value="16SrRNA_methyltr_H"/>
    <property type="match status" value="1"/>
</dbReference>
<dbReference type="InterPro" id="IPR002903">
    <property type="entry name" value="RsmH"/>
</dbReference>
<dbReference type="InterPro" id="IPR023397">
    <property type="entry name" value="SAM-dep_MeTrfase_MraW_recog"/>
</dbReference>
<dbReference type="InterPro" id="IPR029063">
    <property type="entry name" value="SAM-dependent_MTases_sf"/>
</dbReference>
<dbReference type="NCBIfam" id="TIGR00006">
    <property type="entry name" value="16S rRNA (cytosine(1402)-N(4))-methyltransferase RsmH"/>
    <property type="match status" value="1"/>
</dbReference>
<dbReference type="PANTHER" id="PTHR11265:SF0">
    <property type="entry name" value="12S RRNA N4-METHYLCYTIDINE METHYLTRANSFERASE"/>
    <property type="match status" value="1"/>
</dbReference>
<dbReference type="PANTHER" id="PTHR11265">
    <property type="entry name" value="S-ADENOSYL-METHYLTRANSFERASE MRAW"/>
    <property type="match status" value="1"/>
</dbReference>
<dbReference type="Pfam" id="PF01795">
    <property type="entry name" value="Methyltransf_5"/>
    <property type="match status" value="1"/>
</dbReference>
<dbReference type="PIRSF" id="PIRSF004486">
    <property type="entry name" value="MraW"/>
    <property type="match status" value="1"/>
</dbReference>
<dbReference type="SUPFAM" id="SSF81799">
    <property type="entry name" value="Putative methyltransferase TM0872, insert domain"/>
    <property type="match status" value="1"/>
</dbReference>
<dbReference type="SUPFAM" id="SSF53335">
    <property type="entry name" value="S-adenosyl-L-methionine-dependent methyltransferases"/>
    <property type="match status" value="1"/>
</dbReference>
<reference key="1">
    <citation type="submission" date="2004-12" db="EMBL/GenBank/DDBJ databases">
        <title>The genome sequence of Borrelia hermsii and Borrelia turicatae: comparative analysis of two agents of endemic N. America relapsing fever.</title>
        <authorList>
            <person name="Porcella S.F."/>
            <person name="Raffel S.J."/>
            <person name="Schrumpf M.E."/>
            <person name="Montgomery B."/>
            <person name="Smith T."/>
            <person name="Schwan T.G."/>
        </authorList>
    </citation>
    <scope>NUCLEOTIDE SEQUENCE [LARGE SCALE GENOMIC DNA]</scope>
    <source>
        <strain>91E135</strain>
    </source>
</reference>
<keyword id="KW-0963">Cytoplasm</keyword>
<keyword id="KW-0489">Methyltransferase</keyword>
<keyword id="KW-1185">Reference proteome</keyword>
<keyword id="KW-0698">rRNA processing</keyword>
<keyword id="KW-0949">S-adenosyl-L-methionine</keyword>
<keyword id="KW-0808">Transferase</keyword>
<sequence length="297" mass="34461">MGNIFHIPVLLEEIINLLEASNISDGFVFVDCTLGEGGHSSAVLKKYQNINVIGIDRDDVVLNRAKESLIEFKGRVSYFNTWFDDFFSEYPLSSKINFILADLGISMFHYKMSGRGFSFFEDERLDMRLYPGAGGLSAYDIINTFDKKRLENLIYELSGERYSRRIVKSILEYRKIKKIETPRELQDIVSKAYPRIKLKINPATKTFQALRIYVNDELFRLKRSLPLWVESLSNNGVLAIVTFHSLEDKIVKEFFKGLSKDQYCILTKKPIMPRCEEKRFNSASRSAKLRVIKKLYE</sequence>
<name>RSMH_BORT9</name>
<organism>
    <name type="scientific">Borrelia turicatae (strain 91E135)</name>
    <dbReference type="NCBI Taxonomy" id="314724"/>
    <lineage>
        <taxon>Bacteria</taxon>
        <taxon>Pseudomonadati</taxon>
        <taxon>Spirochaetota</taxon>
        <taxon>Spirochaetia</taxon>
        <taxon>Spirochaetales</taxon>
        <taxon>Borreliaceae</taxon>
        <taxon>Borrelia</taxon>
    </lineage>
</organism>
<feature type="chain" id="PRO_0000386756" description="Ribosomal RNA small subunit methyltransferase H">
    <location>
        <begin position="1"/>
        <end position="297"/>
    </location>
</feature>
<feature type="binding site" evidence="1">
    <location>
        <begin position="37"/>
        <end position="39"/>
    </location>
    <ligand>
        <name>S-adenosyl-L-methionine</name>
        <dbReference type="ChEBI" id="CHEBI:59789"/>
    </ligand>
</feature>
<feature type="binding site" evidence="1">
    <location>
        <position position="56"/>
    </location>
    <ligand>
        <name>S-adenosyl-L-methionine</name>
        <dbReference type="ChEBI" id="CHEBI:59789"/>
    </ligand>
</feature>
<feature type="binding site" evidence="1">
    <location>
        <position position="87"/>
    </location>
    <ligand>
        <name>S-adenosyl-L-methionine</name>
        <dbReference type="ChEBI" id="CHEBI:59789"/>
    </ligand>
</feature>
<feature type="binding site" evidence="1">
    <location>
        <position position="102"/>
    </location>
    <ligand>
        <name>S-adenosyl-L-methionine</name>
        <dbReference type="ChEBI" id="CHEBI:59789"/>
    </ligand>
</feature>
<feature type="binding site" evidence="1">
    <location>
        <position position="109"/>
    </location>
    <ligand>
        <name>S-adenosyl-L-methionine</name>
        <dbReference type="ChEBI" id="CHEBI:59789"/>
    </ligand>
</feature>
<proteinExistence type="inferred from homology"/>
<comment type="function">
    <text evidence="1">Specifically methylates the N4 position of cytidine in position 1402 (C1402) of 16S rRNA.</text>
</comment>
<comment type="catalytic activity">
    <reaction evidence="1">
        <text>cytidine(1402) in 16S rRNA + S-adenosyl-L-methionine = N(4)-methylcytidine(1402) in 16S rRNA + S-adenosyl-L-homocysteine + H(+)</text>
        <dbReference type="Rhea" id="RHEA:42928"/>
        <dbReference type="Rhea" id="RHEA-COMP:10286"/>
        <dbReference type="Rhea" id="RHEA-COMP:10287"/>
        <dbReference type="ChEBI" id="CHEBI:15378"/>
        <dbReference type="ChEBI" id="CHEBI:57856"/>
        <dbReference type="ChEBI" id="CHEBI:59789"/>
        <dbReference type="ChEBI" id="CHEBI:74506"/>
        <dbReference type="ChEBI" id="CHEBI:82748"/>
        <dbReference type="EC" id="2.1.1.199"/>
    </reaction>
</comment>
<comment type="subcellular location">
    <subcellularLocation>
        <location evidence="1">Cytoplasm</location>
    </subcellularLocation>
</comment>
<comment type="similarity">
    <text evidence="1">Belongs to the methyltransferase superfamily. RsmH family.</text>
</comment>
<protein>
    <recommendedName>
        <fullName evidence="1">Ribosomal RNA small subunit methyltransferase H</fullName>
        <ecNumber evidence="1">2.1.1.199</ecNumber>
    </recommendedName>
    <alternativeName>
        <fullName evidence="1">16S rRNA m(4)C1402 methyltransferase</fullName>
    </alternativeName>
    <alternativeName>
        <fullName evidence="1">rRNA (cytosine-N(4)-)-methyltransferase RsmH</fullName>
    </alternativeName>
</protein>
<evidence type="ECO:0000255" key="1">
    <source>
        <dbReference type="HAMAP-Rule" id="MF_01007"/>
    </source>
</evidence>